<reference key="1">
    <citation type="journal article" date="2000" name="Proc. Natl. Acad. Sci. U.S.A.">
        <title>Taxol biosynthesis: molecular cloning of a benzoyl-CoA:taxane 2alpha-O-benzoyltransferase cDNA from Taxus and functional expression in Escherichia coli.</title>
        <authorList>
            <person name="Walker K."/>
            <person name="Croteau R.B."/>
        </authorList>
    </citation>
    <scope>NUCLEOTIDE SEQUENCE [MRNA]</scope>
    <scope>CHARACTERIZATION</scope>
</reference>
<comment type="function">
    <text>Catalyzes the conversion of 2-debenzoyl-7,13-diacetylbaccatin III, a semisynthetic substrate, to 7,13-diacetylbaccatin III.</text>
</comment>
<comment type="catalytic activity">
    <reaction>
        <text>10-deacetyl-2-debenzoylbaccatin III + benzoyl-CoA = 10-deacetylbaccatin III + CoA</text>
        <dbReference type="Rhea" id="RHEA:18741"/>
        <dbReference type="ChEBI" id="CHEBI:18193"/>
        <dbReference type="ChEBI" id="CHEBI:32897"/>
        <dbReference type="ChEBI" id="CHEBI:57287"/>
        <dbReference type="ChEBI" id="CHEBI:57369"/>
        <dbReference type="EC" id="2.3.1.166"/>
    </reaction>
</comment>
<comment type="pathway">
    <text>Alkaloid biosynthesis; taxol biosynthesis; baccatin III from 10-deacetyl-2-debenzoylbaccatin III: step 1/2.</text>
</comment>
<comment type="similarity">
    <text evidence="2">Belongs to the plant acyltransferase family.</text>
</comment>
<dbReference type="EC" id="2.3.1.166"/>
<dbReference type="EMBL" id="AF297618">
    <property type="protein sequence ID" value="AAG38049.1"/>
    <property type="molecule type" value="mRNA"/>
</dbReference>
<dbReference type="SMR" id="Q9FPW3"/>
<dbReference type="KEGG" id="ag:AAG38049"/>
<dbReference type="BioCyc" id="MetaCyc:MONOMER-13413"/>
<dbReference type="BRENDA" id="2.3.1.166">
    <property type="organism ID" value="6225"/>
</dbReference>
<dbReference type="UniPathway" id="UPA00842">
    <property type="reaction ID" value="UER00810"/>
</dbReference>
<dbReference type="GO" id="GO:0050642">
    <property type="term" value="F:2-alpha-hydroxytaxane 2-O-benzoyltransferase activity"/>
    <property type="evidence" value="ECO:0007669"/>
    <property type="project" value="UniProtKB-EC"/>
</dbReference>
<dbReference type="GO" id="GO:0042617">
    <property type="term" value="P:paclitaxel biosynthetic process"/>
    <property type="evidence" value="ECO:0007669"/>
    <property type="project" value="UniProtKB-UniPathway"/>
</dbReference>
<dbReference type="Gene3D" id="3.30.559.10">
    <property type="entry name" value="Chloramphenicol acetyltransferase-like domain"/>
    <property type="match status" value="2"/>
</dbReference>
<dbReference type="InterPro" id="IPR023213">
    <property type="entry name" value="CAT-like_dom_sf"/>
</dbReference>
<dbReference type="InterPro" id="IPR050898">
    <property type="entry name" value="Plant_acyltransferase"/>
</dbReference>
<dbReference type="PANTHER" id="PTHR31147">
    <property type="entry name" value="ACYL TRANSFERASE 4"/>
    <property type="match status" value="1"/>
</dbReference>
<dbReference type="PANTHER" id="PTHR31147:SF1">
    <property type="entry name" value="ACYL TRANSFERASE 4"/>
    <property type="match status" value="1"/>
</dbReference>
<dbReference type="Pfam" id="PF02458">
    <property type="entry name" value="Transferase"/>
    <property type="match status" value="1"/>
</dbReference>
<sequence>MGRFNVDMIERVIVAPCLQSPKNILHLSPIDNKTRGLTNILSVYNASQRVSVSADPAKTIREALSKVLVYYPPFAGRLRNTENGDLEVECTGEGAVFVEAMADNDLSVLQDFNEYDPSFQQLVFNLREDVNIEDLHLLTVQVTRFTCGGFVVGTRFHHSVSDGKGIGQLLKGMGEMARGEFKPSLEPIWNREMVKPEDIMYLQFDHFDFIHPPLNLEKSIQASMVISFERINYIKRCMMEECKEFFSAFEVVVALIWLARTKSFRIPPNEYVKIIFPIDMRNSFDSPLPKGYYGNAIGNACAMDNVKDLLNGSLLYALMLIKKSKFALNENFKSRILTKPSTLDANMKHENVVGCGDWRNLGFYEADFGWGNAVNVSPMQQQREHELAMQNYFLFLRSAKNMIDGIKILMFMPASMVKPFKIEMEVTINKYVAKICNSKL</sequence>
<organism>
    <name type="scientific">Taxus cuspidata</name>
    <name type="common">Japanese yew</name>
    <dbReference type="NCBI Taxonomy" id="99806"/>
    <lineage>
        <taxon>Eukaryota</taxon>
        <taxon>Viridiplantae</taxon>
        <taxon>Streptophyta</taxon>
        <taxon>Embryophyta</taxon>
        <taxon>Tracheophyta</taxon>
        <taxon>Spermatophyta</taxon>
        <taxon>Pinopsida</taxon>
        <taxon>Pinidae</taxon>
        <taxon>Conifers II</taxon>
        <taxon>Cupressales</taxon>
        <taxon>Taxaceae</taxon>
        <taxon>Taxus</taxon>
    </lineage>
</organism>
<protein>
    <recommendedName>
        <fullName>2-alpha-hydroxytaxane 2-O-benzoyltransferase</fullName>
        <shortName>TBT</shortName>
        <ecNumber>2.3.1.166</ecNumber>
    </recommendedName>
    <alternativeName>
        <fullName>2-debenzoyl-7,13-diacetylbaccatin III-2-O-benzoyl transferase</fullName>
        <shortName>DBBT</shortName>
    </alternativeName>
</protein>
<keyword id="KW-0012">Acyltransferase</keyword>
<keyword id="KW-0876">Taxol biosynthesis</keyword>
<keyword id="KW-0808">Transferase</keyword>
<proteinExistence type="evidence at protein level"/>
<feature type="chain" id="PRO_0000147360" description="2-alpha-hydroxytaxane 2-O-benzoyltransferase">
    <location>
        <begin position="1"/>
        <end position="440"/>
    </location>
</feature>
<feature type="active site" description="Proton acceptor" evidence="1">
    <location>
        <position position="158"/>
    </location>
</feature>
<feature type="active site" description="Proton acceptor" evidence="1">
    <location>
        <position position="367"/>
    </location>
</feature>
<evidence type="ECO:0000255" key="1"/>
<evidence type="ECO:0000305" key="2"/>
<name>DBBT_TAXCU</name>
<accession>Q9FPW3</accession>